<accession>B2SGV8</accession>
<evidence type="ECO:0000255" key="1">
    <source>
        <dbReference type="HAMAP-Rule" id="MF_00332"/>
    </source>
</evidence>
<evidence type="ECO:0000256" key="2">
    <source>
        <dbReference type="SAM" id="MobiDB-lite"/>
    </source>
</evidence>
<organism>
    <name type="scientific">Francisella tularensis subsp. mediasiatica (strain FSC147)</name>
    <dbReference type="NCBI Taxonomy" id="441952"/>
    <lineage>
        <taxon>Bacteria</taxon>
        <taxon>Pseudomonadati</taxon>
        <taxon>Pseudomonadota</taxon>
        <taxon>Gammaproteobacteria</taxon>
        <taxon>Thiotrichales</taxon>
        <taxon>Francisellaceae</taxon>
        <taxon>Francisella</taxon>
    </lineage>
</organism>
<sequence>MGKIIGIDLGTTNSCLAIMDGKTAKVIENAEGHRTTPSVVAYTDSGEILVGQAAKRQAVTNPDNTFFAIKRLIGRKYDDKAVQEDIKKKVPYAVIKADNGDAWVATKEGKKMAPPQVSAEVLRKMKKTAEDYLGEPVTEAVITVPAYFNDSQRQATKDAGKIAGLEVKRIINEPTAAALAYGVDSKKGEQTVAVYDLGGGTFDISIIEIADVDGDNQIEVLSTNGDTFLGGEDFDLALMNYLIDEFKKEQGIDLHNDKLALQRVREAAEKAKVELSSAQQTDVNLPYITADATGPKHLNIKVTRAKFESLVSDLVMRSLEPCKKALEDAGLSKSDITEVLLVGGQTRMPLVQEKVKEFFGKEPRKDMNPDEAVAVGAAIQGGVLAGDVKDVLLLDVTPLSLGIETMGGVMTKLIERNTTIPTKKSQVFSTAEDNQPAVTIHVLQGEREMASANKSLGRFDLADIPPAPRGMPQIEVTFDIDANGILNVSAKDKATGKEQNIVIKSSSGLSEEDIEKMVQDAEANAEADKKFHDLVTARNTADNLIHSSRKAIQELGEKVTAAEKEKIEEACKELEAATKGDDKQAIEAKTKALEEAFAPIAQKAYAEQAQAAGAQGGAKAEEPKKEEDVVDADFEDVEDDKK</sequence>
<keyword id="KW-0067">ATP-binding</keyword>
<keyword id="KW-0143">Chaperone</keyword>
<keyword id="KW-0547">Nucleotide-binding</keyword>
<keyword id="KW-0597">Phosphoprotein</keyword>
<keyword id="KW-0346">Stress response</keyword>
<dbReference type="EMBL" id="CP000915">
    <property type="protein sequence ID" value="ACD30966.1"/>
    <property type="molecule type" value="Genomic_DNA"/>
</dbReference>
<dbReference type="SMR" id="B2SGV8"/>
<dbReference type="KEGG" id="ftm:FTM_1061"/>
<dbReference type="HOGENOM" id="CLU_005965_2_1_6"/>
<dbReference type="GO" id="GO:0005524">
    <property type="term" value="F:ATP binding"/>
    <property type="evidence" value="ECO:0007669"/>
    <property type="project" value="UniProtKB-UniRule"/>
</dbReference>
<dbReference type="GO" id="GO:0140662">
    <property type="term" value="F:ATP-dependent protein folding chaperone"/>
    <property type="evidence" value="ECO:0007669"/>
    <property type="project" value="InterPro"/>
</dbReference>
<dbReference type="GO" id="GO:0051082">
    <property type="term" value="F:unfolded protein binding"/>
    <property type="evidence" value="ECO:0007669"/>
    <property type="project" value="InterPro"/>
</dbReference>
<dbReference type="CDD" id="cd10234">
    <property type="entry name" value="ASKHA_NBD_HSP70_DnaK-like"/>
    <property type="match status" value="1"/>
</dbReference>
<dbReference type="FunFam" id="2.60.34.10:FF:000014">
    <property type="entry name" value="Chaperone protein DnaK HSP70"/>
    <property type="match status" value="1"/>
</dbReference>
<dbReference type="FunFam" id="1.20.1270.10:FF:000001">
    <property type="entry name" value="Molecular chaperone DnaK"/>
    <property type="match status" value="1"/>
</dbReference>
<dbReference type="FunFam" id="3.30.420.40:FF:000004">
    <property type="entry name" value="Molecular chaperone DnaK"/>
    <property type="match status" value="1"/>
</dbReference>
<dbReference type="FunFam" id="3.90.640.10:FF:000003">
    <property type="entry name" value="Molecular chaperone DnaK"/>
    <property type="match status" value="1"/>
</dbReference>
<dbReference type="Gene3D" id="1.20.1270.10">
    <property type="match status" value="1"/>
</dbReference>
<dbReference type="Gene3D" id="3.30.420.40">
    <property type="match status" value="2"/>
</dbReference>
<dbReference type="Gene3D" id="3.90.640.10">
    <property type="entry name" value="Actin, Chain A, domain 4"/>
    <property type="match status" value="1"/>
</dbReference>
<dbReference type="Gene3D" id="2.60.34.10">
    <property type="entry name" value="Substrate Binding Domain Of DNAk, Chain A, domain 1"/>
    <property type="match status" value="1"/>
</dbReference>
<dbReference type="HAMAP" id="MF_00332">
    <property type="entry name" value="DnaK"/>
    <property type="match status" value="1"/>
</dbReference>
<dbReference type="InterPro" id="IPR043129">
    <property type="entry name" value="ATPase_NBD"/>
</dbReference>
<dbReference type="InterPro" id="IPR012725">
    <property type="entry name" value="Chaperone_DnaK"/>
</dbReference>
<dbReference type="InterPro" id="IPR018181">
    <property type="entry name" value="Heat_shock_70_CS"/>
</dbReference>
<dbReference type="InterPro" id="IPR029048">
    <property type="entry name" value="HSP70_C_sf"/>
</dbReference>
<dbReference type="InterPro" id="IPR029047">
    <property type="entry name" value="HSP70_peptide-bd_sf"/>
</dbReference>
<dbReference type="InterPro" id="IPR013126">
    <property type="entry name" value="Hsp_70_fam"/>
</dbReference>
<dbReference type="NCBIfam" id="NF001413">
    <property type="entry name" value="PRK00290.1"/>
    <property type="match status" value="1"/>
</dbReference>
<dbReference type="NCBIfam" id="NF003520">
    <property type="entry name" value="PRK05183.1"/>
    <property type="match status" value="1"/>
</dbReference>
<dbReference type="NCBIfam" id="TIGR02350">
    <property type="entry name" value="prok_dnaK"/>
    <property type="match status" value="1"/>
</dbReference>
<dbReference type="PANTHER" id="PTHR19375">
    <property type="entry name" value="HEAT SHOCK PROTEIN 70KDA"/>
    <property type="match status" value="1"/>
</dbReference>
<dbReference type="Pfam" id="PF00012">
    <property type="entry name" value="HSP70"/>
    <property type="match status" value="1"/>
</dbReference>
<dbReference type="PRINTS" id="PR00301">
    <property type="entry name" value="HEATSHOCK70"/>
</dbReference>
<dbReference type="SUPFAM" id="SSF53067">
    <property type="entry name" value="Actin-like ATPase domain"/>
    <property type="match status" value="2"/>
</dbReference>
<dbReference type="SUPFAM" id="SSF100934">
    <property type="entry name" value="Heat shock protein 70kD (HSP70), C-terminal subdomain"/>
    <property type="match status" value="1"/>
</dbReference>
<dbReference type="SUPFAM" id="SSF100920">
    <property type="entry name" value="Heat shock protein 70kD (HSP70), peptide-binding domain"/>
    <property type="match status" value="1"/>
</dbReference>
<dbReference type="PROSITE" id="PS00297">
    <property type="entry name" value="HSP70_1"/>
    <property type="match status" value="1"/>
</dbReference>
<dbReference type="PROSITE" id="PS00329">
    <property type="entry name" value="HSP70_2"/>
    <property type="match status" value="1"/>
</dbReference>
<dbReference type="PROSITE" id="PS01036">
    <property type="entry name" value="HSP70_3"/>
    <property type="match status" value="1"/>
</dbReference>
<proteinExistence type="inferred from homology"/>
<feature type="chain" id="PRO_1000119707" description="Chaperone protein DnaK">
    <location>
        <begin position="1"/>
        <end position="642"/>
    </location>
</feature>
<feature type="region of interest" description="Disordered" evidence="2">
    <location>
        <begin position="609"/>
        <end position="642"/>
    </location>
</feature>
<feature type="compositionally biased region" description="Acidic residues" evidence="2">
    <location>
        <begin position="628"/>
        <end position="642"/>
    </location>
</feature>
<feature type="modified residue" description="Phosphothreonine; by autocatalysis" evidence="1">
    <location>
        <position position="201"/>
    </location>
</feature>
<gene>
    <name evidence="1" type="primary">dnaK</name>
    <name type="ordered locus">FTM_1061</name>
</gene>
<reference key="1">
    <citation type="journal article" date="2009" name="PLoS Pathog.">
        <title>Molecular evolutionary consequences of niche restriction in Francisella tularensis, a facultative intracellular pathogen.</title>
        <authorList>
            <person name="Larsson P."/>
            <person name="Elfsmark D."/>
            <person name="Svensson K."/>
            <person name="Wikstroem P."/>
            <person name="Forsman M."/>
            <person name="Brettin T."/>
            <person name="Keim P."/>
            <person name="Johansson A."/>
        </authorList>
    </citation>
    <scope>NUCLEOTIDE SEQUENCE [LARGE SCALE GENOMIC DNA]</scope>
    <source>
        <strain>FSC147</strain>
    </source>
</reference>
<name>DNAK_FRATM</name>
<comment type="function">
    <text evidence="1">Acts as a chaperone.</text>
</comment>
<comment type="induction">
    <text evidence="1">By stress conditions e.g. heat shock.</text>
</comment>
<comment type="similarity">
    <text evidence="1">Belongs to the heat shock protein 70 family.</text>
</comment>
<protein>
    <recommendedName>
        <fullName evidence="1">Chaperone protein DnaK</fullName>
    </recommendedName>
    <alternativeName>
        <fullName evidence="1">HSP70</fullName>
    </alternativeName>
    <alternativeName>
        <fullName evidence="1">Heat shock 70 kDa protein</fullName>
    </alternativeName>
    <alternativeName>
        <fullName evidence="1">Heat shock protein 70</fullName>
    </alternativeName>
</protein>